<protein>
    <recommendedName>
        <fullName evidence="2">Protein EVI2B</fullName>
    </recommendedName>
    <alternativeName>
        <fullName>Ecotropic viral integration site 2B protein</fullName>
        <shortName evidence="2">EVI-2B</shortName>
    </alternativeName>
    <cdAntigenName>CD361</cdAntigenName>
</protein>
<accession>Q8VD58</accession>
<accession>Q3U1A3</accession>
<sequence>MEFKYLVFIVLCQYLDNTFFSETEAITTEQQSLSTLITPSLYVTTDSQNTAGNALSQTTRFKNISSGQQASPAQITPEQATPAVYVSSSPLTYNITRQAESAVNNSLPQTSPSGFTLTNQPSPSTYNSTGQPPKHLVYTSTQQPPSPAPTSSGKPEVESTHNQPTKSTPTIYLQRDTPPPPPPPLTSEPPSGKGTAHKNNHNAIAAILIGTIIISMLVAILMIILWKYLRKPVLNDQNWAGRSPFADGETPEMCMDNIRESEASTKRASVVSLMTWKPSKSTLLADDLEVKLFESSEHINDTSNLKTDNVEVQINGLSEDSADGSTVGTAVSSDDADLALPPPLLDLDENLPNKPTVTVVSPLPNDSINPQPSPDGLNQVCEEQHSKIQEPFPPPPDSFNVPLSAGDFINNQESAHEAQCQEFSTPDLHPDLTDSLPPPPTELL</sequence>
<dbReference type="EMBL" id="AK034440">
    <property type="protein sequence ID" value="BAC28709.1"/>
    <property type="molecule type" value="mRNA"/>
</dbReference>
<dbReference type="EMBL" id="AK039968">
    <property type="protein sequence ID" value="BAE20560.1"/>
    <property type="molecule type" value="mRNA"/>
</dbReference>
<dbReference type="EMBL" id="AK156127">
    <property type="protein sequence ID" value="BAE33597.1"/>
    <property type="molecule type" value="mRNA"/>
</dbReference>
<dbReference type="EMBL" id="AK170476">
    <property type="protein sequence ID" value="BAE41820.1"/>
    <property type="molecule type" value="mRNA"/>
</dbReference>
<dbReference type="EMBL" id="AK171686">
    <property type="protein sequence ID" value="BAE42611.1"/>
    <property type="molecule type" value="mRNA"/>
</dbReference>
<dbReference type="EMBL" id="AL591174">
    <property type="status" value="NOT_ANNOTATED_CDS"/>
    <property type="molecule type" value="Genomic_DNA"/>
</dbReference>
<dbReference type="EMBL" id="BC017548">
    <property type="protein sequence ID" value="AAH17548.1"/>
    <property type="molecule type" value="mRNA"/>
</dbReference>
<dbReference type="CCDS" id="CCDS25121.1"/>
<dbReference type="RefSeq" id="NP_001070964.1">
    <property type="nucleotide sequence ID" value="NM_001077496.1"/>
</dbReference>
<dbReference type="SMR" id="Q8VD58"/>
<dbReference type="BioGRID" id="229828">
    <property type="interactions" value="1"/>
</dbReference>
<dbReference type="FunCoup" id="Q8VD58">
    <property type="interactions" value="234"/>
</dbReference>
<dbReference type="STRING" id="10090.ENSMUSP00000128569"/>
<dbReference type="GlyCosmos" id="Q8VD58">
    <property type="glycosylation" value="4 sites, No reported glycans"/>
</dbReference>
<dbReference type="GlyGen" id="Q8VD58">
    <property type="glycosylation" value="6 sites, 1 O-linked glycan (1 site)"/>
</dbReference>
<dbReference type="iPTMnet" id="Q8VD58"/>
<dbReference type="PhosphoSitePlus" id="Q8VD58"/>
<dbReference type="jPOST" id="Q8VD58"/>
<dbReference type="PaxDb" id="10090-ENSMUSP00000128569"/>
<dbReference type="PeptideAtlas" id="Q8VD58"/>
<dbReference type="ProteomicsDB" id="275698"/>
<dbReference type="Ensembl" id="ENSMUST00000179322.2">
    <property type="protein sequence ID" value="ENSMUSP00000136153.2"/>
    <property type="gene ID" value="ENSMUSG00000093938.3"/>
</dbReference>
<dbReference type="GeneID" id="216984"/>
<dbReference type="KEGG" id="mmu:101488212"/>
<dbReference type="KEGG" id="mmu:216984"/>
<dbReference type="UCSC" id="uc007kko.1">
    <property type="organism name" value="mouse"/>
</dbReference>
<dbReference type="AGR" id="MGI:1890682"/>
<dbReference type="CTD" id="101488212"/>
<dbReference type="CTD" id="2124"/>
<dbReference type="MGI" id="MGI:1890682">
    <property type="gene designation" value="Evi2b"/>
</dbReference>
<dbReference type="VEuPathDB" id="HostDB:ENSMUSG00000070354"/>
<dbReference type="VEuPathDB" id="HostDB:ENSMUSG00000093938"/>
<dbReference type="eggNOG" id="ENOG502S3T8">
    <property type="taxonomic scope" value="Eukaryota"/>
</dbReference>
<dbReference type="GeneTree" id="ENSGT00390000009142"/>
<dbReference type="HOGENOM" id="CLU_048893_0_0_1"/>
<dbReference type="InParanoid" id="Q8VD58"/>
<dbReference type="OMA" id="GETPDMC"/>
<dbReference type="OrthoDB" id="9451284at2759"/>
<dbReference type="PhylomeDB" id="Q8VD58"/>
<dbReference type="TreeFam" id="TF336167"/>
<dbReference type="BioGRID-ORCS" id="101488212">
    <property type="hits" value="5 hits in 38 CRISPR screens"/>
</dbReference>
<dbReference type="BioGRID-ORCS" id="216984">
    <property type="hits" value="3 hits in 44 CRISPR screens"/>
</dbReference>
<dbReference type="PRO" id="PR:Q8VD58"/>
<dbReference type="Proteomes" id="UP000000589">
    <property type="component" value="Chromosome 11"/>
</dbReference>
<dbReference type="RNAct" id="Q8VD58">
    <property type="molecule type" value="protein"/>
</dbReference>
<dbReference type="Bgee" id="ENSMUSG00000070354">
    <property type="expression patterns" value="Expressed in granulocyte and 17 other cell types or tissues"/>
</dbReference>
<dbReference type="ExpressionAtlas" id="Q8VD58">
    <property type="expression patterns" value="baseline and differential"/>
</dbReference>
<dbReference type="GO" id="GO:0016020">
    <property type="term" value="C:membrane"/>
    <property type="evidence" value="ECO:0007669"/>
    <property type="project" value="UniProtKB-SubCell"/>
</dbReference>
<dbReference type="GO" id="GO:0061515">
    <property type="term" value="P:myeloid cell development"/>
    <property type="evidence" value="ECO:0000315"/>
    <property type="project" value="UniProtKB"/>
</dbReference>
<dbReference type="GO" id="GO:0043066">
    <property type="term" value="P:negative regulation of apoptotic process"/>
    <property type="evidence" value="ECO:0000315"/>
    <property type="project" value="UniProtKB"/>
</dbReference>
<dbReference type="GO" id="GO:0030854">
    <property type="term" value="P:positive regulation of granulocyte differentiation"/>
    <property type="evidence" value="ECO:0000315"/>
    <property type="project" value="UniProtKB"/>
</dbReference>
<dbReference type="GO" id="GO:0045660">
    <property type="term" value="P:positive regulation of neutrophil differentiation"/>
    <property type="evidence" value="ECO:0000315"/>
    <property type="project" value="UniProtKB"/>
</dbReference>
<dbReference type="GO" id="GO:0051726">
    <property type="term" value="P:regulation of cell cycle"/>
    <property type="evidence" value="ECO:0000315"/>
    <property type="project" value="UniProtKB"/>
</dbReference>
<dbReference type="GO" id="GO:2000035">
    <property type="term" value="P:regulation of stem cell division"/>
    <property type="evidence" value="ECO:0000315"/>
    <property type="project" value="UniProtKB"/>
</dbReference>
<dbReference type="InterPro" id="IPR033239">
    <property type="entry name" value="EVI2B"/>
</dbReference>
<dbReference type="PANTHER" id="PTHR15384">
    <property type="entry name" value="PROTEIN EVI2B"/>
    <property type="match status" value="1"/>
</dbReference>
<dbReference type="PANTHER" id="PTHR15384:SF0">
    <property type="entry name" value="PROTEIN EVI2B"/>
    <property type="match status" value="1"/>
</dbReference>
<comment type="function">
    <text evidence="5">Required for granulocyte differentiation and functionality of hematopoietic progenitor cells through the control of cell cycle progression and survival of hematopoietic progenitor cells.</text>
</comment>
<comment type="subcellular location">
    <subcellularLocation>
        <location evidence="1">Membrane</location>
        <topology evidence="1">Single-pass type I membrane protein</topology>
    </subcellularLocation>
</comment>
<comment type="tissue specificity">
    <text evidence="5">Expressed in myeloid and lymphoid progenitors and increased in mature hematopoietic populations with the highest levels in granulocytes.</text>
</comment>
<name>EVI2B_MOUSE</name>
<organism>
    <name type="scientific">Mus musculus</name>
    <name type="common">Mouse</name>
    <dbReference type="NCBI Taxonomy" id="10090"/>
    <lineage>
        <taxon>Eukaryota</taxon>
        <taxon>Metazoa</taxon>
        <taxon>Chordata</taxon>
        <taxon>Craniata</taxon>
        <taxon>Vertebrata</taxon>
        <taxon>Euteleostomi</taxon>
        <taxon>Mammalia</taxon>
        <taxon>Eutheria</taxon>
        <taxon>Euarchontoglires</taxon>
        <taxon>Glires</taxon>
        <taxon>Rodentia</taxon>
        <taxon>Myomorpha</taxon>
        <taxon>Muroidea</taxon>
        <taxon>Muridae</taxon>
        <taxon>Murinae</taxon>
        <taxon>Mus</taxon>
        <taxon>Mus</taxon>
    </lineage>
</organism>
<keyword id="KW-0325">Glycoprotein</keyword>
<keyword id="KW-0472">Membrane</keyword>
<keyword id="KW-0597">Phosphoprotein</keyword>
<keyword id="KW-0656">Proto-oncogene</keyword>
<keyword id="KW-1185">Reference proteome</keyword>
<keyword id="KW-0732">Signal</keyword>
<keyword id="KW-0812">Transmembrane</keyword>
<keyword id="KW-1133">Transmembrane helix</keyword>
<gene>
    <name evidence="6" type="primary">Evi2b</name>
</gene>
<reference key="1">
    <citation type="journal article" date="2005" name="Science">
        <title>The transcriptional landscape of the mammalian genome.</title>
        <authorList>
            <person name="Carninci P."/>
            <person name="Kasukawa T."/>
            <person name="Katayama S."/>
            <person name="Gough J."/>
            <person name="Frith M.C."/>
            <person name="Maeda N."/>
            <person name="Oyama R."/>
            <person name="Ravasi T."/>
            <person name="Lenhard B."/>
            <person name="Wells C."/>
            <person name="Kodzius R."/>
            <person name="Shimokawa K."/>
            <person name="Bajic V.B."/>
            <person name="Brenner S.E."/>
            <person name="Batalov S."/>
            <person name="Forrest A.R."/>
            <person name="Zavolan M."/>
            <person name="Davis M.J."/>
            <person name="Wilming L.G."/>
            <person name="Aidinis V."/>
            <person name="Allen J.E."/>
            <person name="Ambesi-Impiombato A."/>
            <person name="Apweiler R."/>
            <person name="Aturaliya R.N."/>
            <person name="Bailey T.L."/>
            <person name="Bansal M."/>
            <person name="Baxter L."/>
            <person name="Beisel K.W."/>
            <person name="Bersano T."/>
            <person name="Bono H."/>
            <person name="Chalk A.M."/>
            <person name="Chiu K.P."/>
            <person name="Choudhary V."/>
            <person name="Christoffels A."/>
            <person name="Clutterbuck D.R."/>
            <person name="Crowe M.L."/>
            <person name="Dalla E."/>
            <person name="Dalrymple B.P."/>
            <person name="de Bono B."/>
            <person name="Della Gatta G."/>
            <person name="di Bernardo D."/>
            <person name="Down T."/>
            <person name="Engstrom P."/>
            <person name="Fagiolini M."/>
            <person name="Faulkner G."/>
            <person name="Fletcher C.F."/>
            <person name="Fukushima T."/>
            <person name="Furuno M."/>
            <person name="Futaki S."/>
            <person name="Gariboldi M."/>
            <person name="Georgii-Hemming P."/>
            <person name="Gingeras T.R."/>
            <person name="Gojobori T."/>
            <person name="Green R.E."/>
            <person name="Gustincich S."/>
            <person name="Harbers M."/>
            <person name="Hayashi Y."/>
            <person name="Hensch T.K."/>
            <person name="Hirokawa N."/>
            <person name="Hill D."/>
            <person name="Huminiecki L."/>
            <person name="Iacono M."/>
            <person name="Ikeo K."/>
            <person name="Iwama A."/>
            <person name="Ishikawa T."/>
            <person name="Jakt M."/>
            <person name="Kanapin A."/>
            <person name="Katoh M."/>
            <person name="Kawasawa Y."/>
            <person name="Kelso J."/>
            <person name="Kitamura H."/>
            <person name="Kitano H."/>
            <person name="Kollias G."/>
            <person name="Krishnan S.P."/>
            <person name="Kruger A."/>
            <person name="Kummerfeld S.K."/>
            <person name="Kurochkin I.V."/>
            <person name="Lareau L.F."/>
            <person name="Lazarevic D."/>
            <person name="Lipovich L."/>
            <person name="Liu J."/>
            <person name="Liuni S."/>
            <person name="McWilliam S."/>
            <person name="Madan Babu M."/>
            <person name="Madera M."/>
            <person name="Marchionni L."/>
            <person name="Matsuda H."/>
            <person name="Matsuzawa S."/>
            <person name="Miki H."/>
            <person name="Mignone F."/>
            <person name="Miyake S."/>
            <person name="Morris K."/>
            <person name="Mottagui-Tabar S."/>
            <person name="Mulder N."/>
            <person name="Nakano N."/>
            <person name="Nakauchi H."/>
            <person name="Ng P."/>
            <person name="Nilsson R."/>
            <person name="Nishiguchi S."/>
            <person name="Nishikawa S."/>
            <person name="Nori F."/>
            <person name="Ohara O."/>
            <person name="Okazaki Y."/>
            <person name="Orlando V."/>
            <person name="Pang K.C."/>
            <person name="Pavan W.J."/>
            <person name="Pavesi G."/>
            <person name="Pesole G."/>
            <person name="Petrovsky N."/>
            <person name="Piazza S."/>
            <person name="Reed J."/>
            <person name="Reid J.F."/>
            <person name="Ring B.Z."/>
            <person name="Ringwald M."/>
            <person name="Rost B."/>
            <person name="Ruan Y."/>
            <person name="Salzberg S.L."/>
            <person name="Sandelin A."/>
            <person name="Schneider C."/>
            <person name="Schoenbach C."/>
            <person name="Sekiguchi K."/>
            <person name="Semple C.A."/>
            <person name="Seno S."/>
            <person name="Sessa L."/>
            <person name="Sheng Y."/>
            <person name="Shibata Y."/>
            <person name="Shimada H."/>
            <person name="Shimada K."/>
            <person name="Silva D."/>
            <person name="Sinclair B."/>
            <person name="Sperling S."/>
            <person name="Stupka E."/>
            <person name="Sugiura K."/>
            <person name="Sultana R."/>
            <person name="Takenaka Y."/>
            <person name="Taki K."/>
            <person name="Tammoja K."/>
            <person name="Tan S.L."/>
            <person name="Tang S."/>
            <person name="Taylor M.S."/>
            <person name="Tegner J."/>
            <person name="Teichmann S.A."/>
            <person name="Ueda H.R."/>
            <person name="van Nimwegen E."/>
            <person name="Verardo R."/>
            <person name="Wei C.L."/>
            <person name="Yagi K."/>
            <person name="Yamanishi H."/>
            <person name="Zabarovsky E."/>
            <person name="Zhu S."/>
            <person name="Zimmer A."/>
            <person name="Hide W."/>
            <person name="Bult C."/>
            <person name="Grimmond S.M."/>
            <person name="Teasdale R.D."/>
            <person name="Liu E.T."/>
            <person name="Brusic V."/>
            <person name="Quackenbush J."/>
            <person name="Wahlestedt C."/>
            <person name="Mattick J.S."/>
            <person name="Hume D.A."/>
            <person name="Kai C."/>
            <person name="Sasaki D."/>
            <person name="Tomaru Y."/>
            <person name="Fukuda S."/>
            <person name="Kanamori-Katayama M."/>
            <person name="Suzuki M."/>
            <person name="Aoki J."/>
            <person name="Arakawa T."/>
            <person name="Iida J."/>
            <person name="Imamura K."/>
            <person name="Itoh M."/>
            <person name="Kato T."/>
            <person name="Kawaji H."/>
            <person name="Kawagashira N."/>
            <person name="Kawashima T."/>
            <person name="Kojima M."/>
            <person name="Kondo S."/>
            <person name="Konno H."/>
            <person name="Nakano K."/>
            <person name="Ninomiya N."/>
            <person name="Nishio T."/>
            <person name="Okada M."/>
            <person name="Plessy C."/>
            <person name="Shibata K."/>
            <person name="Shiraki T."/>
            <person name="Suzuki S."/>
            <person name="Tagami M."/>
            <person name="Waki K."/>
            <person name="Watahiki A."/>
            <person name="Okamura-Oho Y."/>
            <person name="Suzuki H."/>
            <person name="Kawai J."/>
            <person name="Hayashizaki Y."/>
        </authorList>
    </citation>
    <scope>NUCLEOTIDE SEQUENCE [LARGE SCALE MRNA]</scope>
    <source>
        <strain>C57BL/6J</strain>
        <strain>NOD</strain>
        <tissue>Diencephalon</tissue>
        <tissue>Spleen</tissue>
        <tissue>Thymus</tissue>
    </source>
</reference>
<reference key="2">
    <citation type="journal article" date="2009" name="PLoS Biol.">
        <title>Lineage-specific biology revealed by a finished genome assembly of the mouse.</title>
        <authorList>
            <person name="Church D.M."/>
            <person name="Goodstadt L."/>
            <person name="Hillier L.W."/>
            <person name="Zody M.C."/>
            <person name="Goldstein S."/>
            <person name="She X."/>
            <person name="Bult C.J."/>
            <person name="Agarwala R."/>
            <person name="Cherry J.L."/>
            <person name="DiCuccio M."/>
            <person name="Hlavina W."/>
            <person name="Kapustin Y."/>
            <person name="Meric P."/>
            <person name="Maglott D."/>
            <person name="Birtle Z."/>
            <person name="Marques A.C."/>
            <person name="Graves T."/>
            <person name="Zhou S."/>
            <person name="Teague B."/>
            <person name="Potamousis K."/>
            <person name="Churas C."/>
            <person name="Place M."/>
            <person name="Herschleb J."/>
            <person name="Runnheim R."/>
            <person name="Forrest D."/>
            <person name="Amos-Landgraf J."/>
            <person name="Schwartz D.C."/>
            <person name="Cheng Z."/>
            <person name="Lindblad-Toh K."/>
            <person name="Eichler E.E."/>
            <person name="Ponting C.P."/>
        </authorList>
    </citation>
    <scope>NUCLEOTIDE SEQUENCE [LARGE SCALE GENOMIC DNA]</scope>
    <source>
        <strain>C57BL/6J</strain>
    </source>
</reference>
<reference key="3">
    <citation type="journal article" date="2004" name="Genome Res.">
        <title>The status, quality, and expansion of the NIH full-length cDNA project: the Mammalian Gene Collection (MGC).</title>
        <authorList>
            <consortium name="The MGC Project Team"/>
        </authorList>
    </citation>
    <scope>NUCLEOTIDE SEQUENCE [LARGE SCALE MRNA]</scope>
    <source>
        <strain>FVB/N</strain>
        <tissue>Salivary gland</tissue>
    </source>
</reference>
<reference key="4">
    <citation type="journal article" date="2007" name="Proc. Natl. Acad. Sci. U.S.A.">
        <title>Large-scale phosphorylation analysis of mouse liver.</title>
        <authorList>
            <person name="Villen J."/>
            <person name="Beausoleil S.A."/>
            <person name="Gerber S.A."/>
            <person name="Gygi S.P."/>
        </authorList>
    </citation>
    <scope>PHOSPHORYLATION [LARGE SCALE ANALYSIS] AT SER-295</scope>
    <scope>IDENTIFICATION BY MASS SPECTROMETRY [LARGE SCALE ANALYSIS]</scope>
    <source>
        <tissue>Liver</tissue>
    </source>
</reference>
<reference key="5">
    <citation type="journal article" date="2009" name="Immunity">
        <title>The phagosomal proteome in interferon-gamma-activated macrophages.</title>
        <authorList>
            <person name="Trost M."/>
            <person name="English L."/>
            <person name="Lemieux S."/>
            <person name="Courcelles M."/>
            <person name="Desjardins M."/>
            <person name="Thibault P."/>
        </authorList>
    </citation>
    <scope>PHOSPHORYLATION [LARGE SCALE ANALYSIS] AT THR-250 AND SER-295</scope>
    <scope>IDENTIFICATION BY MASS SPECTROMETRY [LARGE SCALE ANALYSIS]</scope>
</reference>
<reference key="6">
    <citation type="journal article" date="2010" name="Cell">
        <title>A tissue-specific atlas of mouse protein phosphorylation and expression.</title>
        <authorList>
            <person name="Huttlin E.L."/>
            <person name="Jedrychowski M.P."/>
            <person name="Elias J.E."/>
            <person name="Goswami T."/>
            <person name="Rad R."/>
            <person name="Beausoleil S.A."/>
            <person name="Villen J."/>
            <person name="Haas W."/>
            <person name="Sowa M.E."/>
            <person name="Gygi S.P."/>
        </authorList>
    </citation>
    <scope>PHOSPHORYLATION [LARGE SCALE ANALYSIS] AT SER-269; SER-272; SER-279 AND SER-295</scope>
    <scope>IDENTIFICATION BY MASS SPECTROMETRY [LARGE SCALE ANALYSIS]</scope>
    <source>
        <tissue>Kidney</tissue>
        <tissue>Lung</tissue>
        <tissue>Spleen</tissue>
    </source>
</reference>
<reference key="7">
    <citation type="journal article" date="2017" name="Cell Death Differ.">
        <title>EVI2B is a C/EBPalpha target gene required for granulocytic differentiation and functionality of hematopoietic progenitors.</title>
        <authorList>
            <person name="Zjablovskaja P."/>
            <person name="Kardosova M."/>
            <person name="Danek P."/>
            <person name="Angelisova P."/>
            <person name="Benoukraf T."/>
            <person name="Wurm A.A."/>
            <person name="Kalina T."/>
            <person name="Sian S."/>
            <person name="Balastik M."/>
            <person name="Delwel R."/>
            <person name="Brdicka T."/>
            <person name="Tenen D.G."/>
            <person name="Behre G."/>
            <person name="Fiore F."/>
            <person name="Malissen B."/>
            <person name="Horejsi V."/>
            <person name="Alberich-Jorda M."/>
        </authorList>
    </citation>
    <scope>TISSUE SPECIFICITY</scope>
    <scope>FUNCTION</scope>
</reference>
<feature type="signal peptide" evidence="3">
    <location>
        <begin position="1"/>
        <end position="23"/>
    </location>
</feature>
<feature type="chain" id="PRO_0000021214" description="Protein EVI2B">
    <location>
        <begin position="24"/>
        <end position="444"/>
    </location>
</feature>
<feature type="topological domain" description="Extracellular" evidence="3">
    <location>
        <begin position="24"/>
        <end position="203"/>
    </location>
</feature>
<feature type="transmembrane region" description="Helical" evidence="3">
    <location>
        <begin position="204"/>
        <end position="224"/>
    </location>
</feature>
<feature type="topological domain" description="Cytoplasmic" evidence="3">
    <location>
        <begin position="225"/>
        <end position="444"/>
    </location>
</feature>
<feature type="region of interest" description="Disordered" evidence="4">
    <location>
        <begin position="104"/>
        <end position="197"/>
    </location>
</feature>
<feature type="region of interest" description="Disordered" evidence="4">
    <location>
        <begin position="318"/>
        <end position="337"/>
    </location>
</feature>
<feature type="region of interest" description="Disordered" evidence="4">
    <location>
        <begin position="361"/>
        <end position="444"/>
    </location>
</feature>
<feature type="compositionally biased region" description="Polar residues" evidence="4">
    <location>
        <begin position="104"/>
        <end position="131"/>
    </location>
</feature>
<feature type="compositionally biased region" description="Polar residues" evidence="4">
    <location>
        <begin position="160"/>
        <end position="171"/>
    </location>
</feature>
<feature type="compositionally biased region" description="Pro residues" evidence="4">
    <location>
        <begin position="177"/>
        <end position="187"/>
    </location>
</feature>
<feature type="compositionally biased region" description="Polar residues" evidence="4">
    <location>
        <begin position="318"/>
        <end position="332"/>
    </location>
</feature>
<feature type="compositionally biased region" description="Polar residues" evidence="4">
    <location>
        <begin position="361"/>
        <end position="370"/>
    </location>
</feature>
<feature type="modified residue" description="Phosphothreonine" evidence="8">
    <location>
        <position position="250"/>
    </location>
</feature>
<feature type="modified residue" description="Phosphoserine" evidence="9">
    <location>
        <position position="269"/>
    </location>
</feature>
<feature type="modified residue" description="Phosphoserine" evidence="9">
    <location>
        <position position="272"/>
    </location>
</feature>
<feature type="modified residue" description="Phosphoserine" evidence="9">
    <location>
        <position position="279"/>
    </location>
</feature>
<feature type="modified residue" description="Phosphoserine" evidence="7 8 9">
    <location>
        <position position="295"/>
    </location>
</feature>
<feature type="glycosylation site" description="N-linked (GlcNAc...) asparagine" evidence="3">
    <location>
        <position position="63"/>
    </location>
</feature>
<feature type="glycosylation site" description="N-linked (GlcNAc...) asparagine" evidence="3">
    <location>
        <position position="94"/>
    </location>
</feature>
<feature type="glycosylation site" description="N-linked (GlcNAc...) asparagine" evidence="3">
    <location>
        <position position="104"/>
    </location>
</feature>
<feature type="glycosylation site" description="N-linked (GlcNAc...) asparagine" evidence="3">
    <location>
        <position position="127"/>
    </location>
</feature>
<proteinExistence type="evidence at protein level"/>
<evidence type="ECO:0000250" key="1"/>
<evidence type="ECO:0000250" key="2">
    <source>
        <dbReference type="UniProtKB" id="P34910"/>
    </source>
</evidence>
<evidence type="ECO:0000255" key="3"/>
<evidence type="ECO:0000256" key="4">
    <source>
        <dbReference type="SAM" id="MobiDB-lite"/>
    </source>
</evidence>
<evidence type="ECO:0000269" key="5">
    <source>
    </source>
</evidence>
<evidence type="ECO:0000312" key="6">
    <source>
        <dbReference type="MGI" id="MGI:1890682"/>
    </source>
</evidence>
<evidence type="ECO:0007744" key="7">
    <source>
    </source>
</evidence>
<evidence type="ECO:0007744" key="8">
    <source>
    </source>
</evidence>
<evidence type="ECO:0007744" key="9">
    <source>
    </source>
</evidence>